<organism>
    <name type="scientific">Xanthomonas euvesicatoria pv. vesicatoria (strain 85-10)</name>
    <name type="common">Xanthomonas campestris pv. vesicatoria</name>
    <dbReference type="NCBI Taxonomy" id="316273"/>
    <lineage>
        <taxon>Bacteria</taxon>
        <taxon>Pseudomonadati</taxon>
        <taxon>Pseudomonadota</taxon>
        <taxon>Gammaproteobacteria</taxon>
        <taxon>Lysobacterales</taxon>
        <taxon>Lysobacteraceae</taxon>
        <taxon>Xanthomonas</taxon>
    </lineage>
</organism>
<protein>
    <recommendedName>
        <fullName evidence="1">Large ribosomal subunit protein uL14</fullName>
    </recommendedName>
    <alternativeName>
        <fullName evidence="2">50S ribosomal protein L14</fullName>
    </alternativeName>
</protein>
<sequence length="122" mass="13524">MIQMQSYLDVADNSGAKEVMCIKVLGGSKRRYAHIGDIIKVTVKDAIPRGKVKKGEVYDAVVVRTRKGVRRPDGSLIRFDGNAAVLLNNKQEPIGTRIFGPVTRELRSEKFMKIVSLAPEVL</sequence>
<gene>
    <name evidence="1" type="primary">rplN</name>
    <name type="ordered locus">XCV1009</name>
</gene>
<evidence type="ECO:0000255" key="1">
    <source>
        <dbReference type="HAMAP-Rule" id="MF_01367"/>
    </source>
</evidence>
<evidence type="ECO:0000305" key="2"/>
<accession>Q3BWX3</accession>
<comment type="function">
    <text evidence="1">Binds to 23S rRNA. Forms part of two intersubunit bridges in the 70S ribosome.</text>
</comment>
<comment type="subunit">
    <text evidence="1">Part of the 50S ribosomal subunit. Forms a cluster with proteins L3 and L19. In the 70S ribosome, L14 and L19 interact and together make contacts with the 16S rRNA in bridges B5 and B8.</text>
</comment>
<comment type="similarity">
    <text evidence="1">Belongs to the universal ribosomal protein uL14 family.</text>
</comment>
<proteinExistence type="inferred from homology"/>
<reference key="1">
    <citation type="journal article" date="2005" name="J. Bacteriol.">
        <title>Insights into genome plasticity and pathogenicity of the plant pathogenic Bacterium Xanthomonas campestris pv. vesicatoria revealed by the complete genome sequence.</title>
        <authorList>
            <person name="Thieme F."/>
            <person name="Koebnik R."/>
            <person name="Bekel T."/>
            <person name="Berger C."/>
            <person name="Boch J."/>
            <person name="Buettner D."/>
            <person name="Caldana C."/>
            <person name="Gaigalat L."/>
            <person name="Goesmann A."/>
            <person name="Kay S."/>
            <person name="Kirchner O."/>
            <person name="Lanz C."/>
            <person name="Linke B."/>
            <person name="McHardy A.C."/>
            <person name="Meyer F."/>
            <person name="Mittenhuber G."/>
            <person name="Nies D.H."/>
            <person name="Niesbach-Kloesgen U."/>
            <person name="Patschkowski T."/>
            <person name="Rueckert C."/>
            <person name="Rupp O."/>
            <person name="Schneiker S."/>
            <person name="Schuster S.C."/>
            <person name="Vorhoelter F.J."/>
            <person name="Weber E."/>
            <person name="Puehler A."/>
            <person name="Bonas U."/>
            <person name="Bartels D."/>
            <person name="Kaiser O."/>
        </authorList>
    </citation>
    <scope>NUCLEOTIDE SEQUENCE [LARGE SCALE GENOMIC DNA]</scope>
    <source>
        <strain>85-10</strain>
    </source>
</reference>
<keyword id="KW-0687">Ribonucleoprotein</keyword>
<keyword id="KW-0689">Ribosomal protein</keyword>
<keyword id="KW-0694">RNA-binding</keyword>
<keyword id="KW-0699">rRNA-binding</keyword>
<name>RL14_XANE5</name>
<dbReference type="EMBL" id="AM039952">
    <property type="protein sequence ID" value="CAJ22640.1"/>
    <property type="molecule type" value="Genomic_DNA"/>
</dbReference>
<dbReference type="RefSeq" id="WP_003486699.1">
    <property type="nucleotide sequence ID" value="NZ_CP017190.1"/>
</dbReference>
<dbReference type="SMR" id="Q3BWX3"/>
<dbReference type="STRING" id="456327.BJD11_17690"/>
<dbReference type="GeneID" id="97509346"/>
<dbReference type="KEGG" id="xcv:XCV1009"/>
<dbReference type="eggNOG" id="COG0093">
    <property type="taxonomic scope" value="Bacteria"/>
</dbReference>
<dbReference type="HOGENOM" id="CLU_095071_2_1_6"/>
<dbReference type="Proteomes" id="UP000007069">
    <property type="component" value="Chromosome"/>
</dbReference>
<dbReference type="GO" id="GO:0022625">
    <property type="term" value="C:cytosolic large ribosomal subunit"/>
    <property type="evidence" value="ECO:0007669"/>
    <property type="project" value="TreeGrafter"/>
</dbReference>
<dbReference type="GO" id="GO:0070180">
    <property type="term" value="F:large ribosomal subunit rRNA binding"/>
    <property type="evidence" value="ECO:0007669"/>
    <property type="project" value="TreeGrafter"/>
</dbReference>
<dbReference type="GO" id="GO:0003735">
    <property type="term" value="F:structural constituent of ribosome"/>
    <property type="evidence" value="ECO:0007669"/>
    <property type="project" value="InterPro"/>
</dbReference>
<dbReference type="GO" id="GO:0006412">
    <property type="term" value="P:translation"/>
    <property type="evidence" value="ECO:0007669"/>
    <property type="project" value="UniProtKB-UniRule"/>
</dbReference>
<dbReference type="CDD" id="cd00337">
    <property type="entry name" value="Ribosomal_uL14"/>
    <property type="match status" value="1"/>
</dbReference>
<dbReference type="FunFam" id="2.40.150.20:FF:000001">
    <property type="entry name" value="50S ribosomal protein L14"/>
    <property type="match status" value="1"/>
</dbReference>
<dbReference type="Gene3D" id="2.40.150.20">
    <property type="entry name" value="Ribosomal protein L14"/>
    <property type="match status" value="1"/>
</dbReference>
<dbReference type="HAMAP" id="MF_01367">
    <property type="entry name" value="Ribosomal_uL14"/>
    <property type="match status" value="1"/>
</dbReference>
<dbReference type="InterPro" id="IPR000218">
    <property type="entry name" value="Ribosomal_uL14"/>
</dbReference>
<dbReference type="InterPro" id="IPR005745">
    <property type="entry name" value="Ribosomal_uL14_bac-type"/>
</dbReference>
<dbReference type="InterPro" id="IPR019972">
    <property type="entry name" value="Ribosomal_uL14_CS"/>
</dbReference>
<dbReference type="InterPro" id="IPR036853">
    <property type="entry name" value="Ribosomal_uL14_sf"/>
</dbReference>
<dbReference type="NCBIfam" id="TIGR01067">
    <property type="entry name" value="rplN_bact"/>
    <property type="match status" value="1"/>
</dbReference>
<dbReference type="PANTHER" id="PTHR11761">
    <property type="entry name" value="50S/60S RIBOSOMAL PROTEIN L14/L23"/>
    <property type="match status" value="1"/>
</dbReference>
<dbReference type="PANTHER" id="PTHR11761:SF3">
    <property type="entry name" value="LARGE RIBOSOMAL SUBUNIT PROTEIN UL14M"/>
    <property type="match status" value="1"/>
</dbReference>
<dbReference type="Pfam" id="PF00238">
    <property type="entry name" value="Ribosomal_L14"/>
    <property type="match status" value="1"/>
</dbReference>
<dbReference type="SMART" id="SM01374">
    <property type="entry name" value="Ribosomal_L14"/>
    <property type="match status" value="1"/>
</dbReference>
<dbReference type="SUPFAM" id="SSF50193">
    <property type="entry name" value="Ribosomal protein L14"/>
    <property type="match status" value="1"/>
</dbReference>
<dbReference type="PROSITE" id="PS00049">
    <property type="entry name" value="RIBOSOMAL_L14"/>
    <property type="match status" value="1"/>
</dbReference>
<feature type="chain" id="PRO_0000266586" description="Large ribosomal subunit protein uL14">
    <location>
        <begin position="1"/>
        <end position="122"/>
    </location>
</feature>